<dbReference type="EMBL" id="CU329670">
    <property type="protein sequence ID" value="CAA91133.2"/>
    <property type="molecule type" value="Genomic_DNA"/>
</dbReference>
<dbReference type="PIR" id="S62453">
    <property type="entry name" value="S62453"/>
</dbReference>
<dbReference type="PIR" id="T11619">
    <property type="entry name" value="T11619"/>
</dbReference>
<dbReference type="RefSeq" id="NP_593058.1">
    <property type="nucleotide sequence ID" value="NM_001018456.2"/>
</dbReference>
<dbReference type="SMR" id="Q09793"/>
<dbReference type="BioGRID" id="278380">
    <property type="interactions" value="3"/>
</dbReference>
<dbReference type="FunCoup" id="Q09793">
    <property type="interactions" value="99"/>
</dbReference>
<dbReference type="STRING" id="284812.Q09793"/>
<dbReference type="iPTMnet" id="Q09793"/>
<dbReference type="PaxDb" id="4896-SPAC22G7.09c.1"/>
<dbReference type="EnsemblFungi" id="SPAC22G7.09c.1">
    <property type="protein sequence ID" value="SPAC22G7.09c.1:pep"/>
    <property type="gene ID" value="SPAC22G7.09c"/>
</dbReference>
<dbReference type="GeneID" id="2541890"/>
<dbReference type="KEGG" id="spo:2541890"/>
<dbReference type="PomBase" id="SPAC22G7.09c">
    <property type="gene designation" value="nup45"/>
</dbReference>
<dbReference type="VEuPathDB" id="FungiDB:SPAC22G7.09c"/>
<dbReference type="eggNOG" id="KOG0845">
    <property type="taxonomic scope" value="Eukaryota"/>
</dbReference>
<dbReference type="HOGENOM" id="CLU_645843_0_0_1"/>
<dbReference type="InParanoid" id="Q09793"/>
<dbReference type="OMA" id="RDNTDVF"/>
<dbReference type="PhylomeDB" id="Q09793"/>
<dbReference type="Reactome" id="R-SPO-159227">
    <property type="pathway name" value="Transport of the SLBP independent Mature mRNA"/>
</dbReference>
<dbReference type="Reactome" id="R-SPO-159231">
    <property type="pathway name" value="Transport of Mature mRNA Derived from an Intronless Transcript"/>
</dbReference>
<dbReference type="Reactome" id="R-SPO-159236">
    <property type="pathway name" value="Transport of Mature mRNA derived from an Intron-Containing Transcript"/>
</dbReference>
<dbReference type="Reactome" id="R-SPO-3371453">
    <property type="pathway name" value="Regulation of HSF1-mediated heat shock response"/>
</dbReference>
<dbReference type="Reactome" id="R-SPO-4085377">
    <property type="pathway name" value="SUMOylation of SUMOylation proteins"/>
</dbReference>
<dbReference type="Reactome" id="R-SPO-4551638">
    <property type="pathway name" value="SUMOylation of chromatin organization proteins"/>
</dbReference>
<dbReference type="Reactome" id="R-SPO-4570464">
    <property type="pathway name" value="SUMOylation of RNA binding proteins"/>
</dbReference>
<dbReference type="Reactome" id="R-SPO-5578749">
    <property type="pathway name" value="Transcriptional regulation by small RNAs"/>
</dbReference>
<dbReference type="PRO" id="PR:Q09793"/>
<dbReference type="Proteomes" id="UP000002485">
    <property type="component" value="Chromosome I"/>
</dbReference>
<dbReference type="GO" id="GO:0005737">
    <property type="term" value="C:cytoplasm"/>
    <property type="evidence" value="ECO:0007005"/>
    <property type="project" value="PomBase"/>
</dbReference>
<dbReference type="GO" id="GO:0034399">
    <property type="term" value="C:nuclear periphery"/>
    <property type="evidence" value="ECO:0000314"/>
    <property type="project" value="PomBase"/>
</dbReference>
<dbReference type="GO" id="GO:0005643">
    <property type="term" value="C:nuclear pore"/>
    <property type="evidence" value="ECO:0000314"/>
    <property type="project" value="PomBase"/>
</dbReference>
<dbReference type="GO" id="GO:0005634">
    <property type="term" value="C:nucleus"/>
    <property type="evidence" value="ECO:0007005"/>
    <property type="project" value="PomBase"/>
</dbReference>
<dbReference type="GO" id="GO:0008139">
    <property type="term" value="F:nuclear localization sequence binding"/>
    <property type="evidence" value="ECO:0000318"/>
    <property type="project" value="GO_Central"/>
</dbReference>
<dbReference type="GO" id="GO:0017056">
    <property type="term" value="F:structural constituent of nuclear pore"/>
    <property type="evidence" value="ECO:0000318"/>
    <property type="project" value="GO_Central"/>
</dbReference>
<dbReference type="GO" id="GO:0051028">
    <property type="term" value="P:mRNA transport"/>
    <property type="evidence" value="ECO:0007669"/>
    <property type="project" value="UniProtKB-KW"/>
</dbReference>
<dbReference type="GO" id="GO:0006913">
    <property type="term" value="P:nucleocytoplasmic transport"/>
    <property type="evidence" value="ECO:0000305"/>
    <property type="project" value="PomBase"/>
</dbReference>
<dbReference type="GO" id="GO:0015031">
    <property type="term" value="P:protein transport"/>
    <property type="evidence" value="ECO:0007669"/>
    <property type="project" value="UniProtKB-KW"/>
</dbReference>
<dbReference type="Gene3D" id="6.10.140.1350">
    <property type="match status" value="1"/>
</dbReference>
<dbReference type="InterPro" id="IPR025574">
    <property type="entry name" value="Nucleoporin_FG_rpt"/>
</dbReference>
<dbReference type="InterPro" id="IPR024882">
    <property type="entry name" value="NUP58/p45/49"/>
</dbReference>
<dbReference type="PANTHER" id="PTHR13437">
    <property type="entry name" value="NUCLEOPORIN P58/P45 NUCLEOPORIN-LIKE PROTEIN 1"/>
    <property type="match status" value="1"/>
</dbReference>
<dbReference type="PANTHER" id="PTHR13437:SF2">
    <property type="entry name" value="NUCLEOPORIN P58_P45"/>
    <property type="match status" value="1"/>
</dbReference>
<dbReference type="Pfam" id="PF13634">
    <property type="entry name" value="Nucleoporin_FG"/>
    <property type="match status" value="1"/>
</dbReference>
<gene>
    <name type="primary">nup45</name>
    <name type="ORF">SPAC22G7.09c</name>
</gene>
<proteinExistence type="evidence at protein level"/>
<protein>
    <recommendedName>
        <fullName>Nucleoporin nup45</fullName>
    </recommendedName>
    <alternativeName>
        <fullName>Nuclear pore protein nup45</fullName>
    </alternativeName>
</protein>
<sequence length="425" mass="44983">MFGLNKTPSFGSTGTQNQNTGTSAGTGLFSSNTFGNNTQANTPASTGFGGVTGGAFGQTKPQTGGSLFGNKPNATSTTPGLNLFGQNPQAAPGGSLFGASTTKPQAPGGLFNQNQTQAQPAQAAPTGGLFGLSGQNQTQSQTQPAQANTSLFGQSNIGTTGGLFDQNRPNTSTFGQFSTQPASAGLFGQSTQPSGSTGFGLSNNTQTTPFFSAAQQQPSTTQLPSNPAINATTRYSSLNANTQKFLDDLDKEIFSQIQLAEELQTKLGTVSELVESVPNDVAEVQRRLSSVSTALLIDSDEIETTKRVVDEDTSNARISSRILDVFKTPGATYPFASNDPLMNYFEQFTENAKKRTDLYAATIGELEQHLEQVETTPQNNSPEALLKTIKEEHKLFMALSNRFAQVHDEVKRLQVNTSTSLPFIS</sequence>
<accession>Q09793</accession>
<comment type="function">
    <text evidence="2">Functions as a component of the nuclear pore complex (NPC). NPC components, collectively referred to as nucleoporins (NUPs), can play the role of both NPC structural components and of docking or interaction partners for transiently associated nuclear transport factors. Active directional transport is assured by both, a Phe-Gly (FG) repeat affinity gradient for these transport factors across the NPC and a transport cofactor concentration gradient across the nuclear envelope.</text>
</comment>
<comment type="subcellular location">
    <subcellularLocation>
        <location>Cytoplasm</location>
    </subcellularLocation>
    <subcellularLocation>
        <location>Nucleus</location>
        <location>Nuclear pore complex</location>
    </subcellularLocation>
</comment>
<comment type="domain">
    <text>Contains FG repeats. FG repeats are interaction sites for karyopherins (importins, exportins) and form probably an affinity gradient, guiding the transport proteins unidirectionally with their cargo through the NPC. FG repeat regions are highly flexible and lack ordered secondary structure. The overall conservation of FG repeats regarding exact sequence, spacing, and repeat unit length is limited. FG repeat types and their physico-chemical environment change across the NPC from the nucleoplasmic to the cytoplasmic side.</text>
</comment>
<reference key="1">
    <citation type="journal article" date="2002" name="Nature">
        <title>The genome sequence of Schizosaccharomyces pombe.</title>
        <authorList>
            <person name="Wood V."/>
            <person name="Gwilliam R."/>
            <person name="Rajandream M.A."/>
            <person name="Lyne M.H."/>
            <person name="Lyne R."/>
            <person name="Stewart A."/>
            <person name="Sgouros J.G."/>
            <person name="Peat N."/>
            <person name="Hayles J."/>
            <person name="Baker S.G."/>
            <person name="Basham D."/>
            <person name="Bowman S."/>
            <person name="Brooks K."/>
            <person name="Brown D."/>
            <person name="Brown S."/>
            <person name="Chillingworth T."/>
            <person name="Churcher C.M."/>
            <person name="Collins M."/>
            <person name="Connor R."/>
            <person name="Cronin A."/>
            <person name="Davis P."/>
            <person name="Feltwell T."/>
            <person name="Fraser A."/>
            <person name="Gentles S."/>
            <person name="Goble A."/>
            <person name="Hamlin N."/>
            <person name="Harris D.E."/>
            <person name="Hidalgo J."/>
            <person name="Hodgson G."/>
            <person name="Holroyd S."/>
            <person name="Hornsby T."/>
            <person name="Howarth S."/>
            <person name="Huckle E.J."/>
            <person name="Hunt S."/>
            <person name="Jagels K."/>
            <person name="James K.D."/>
            <person name="Jones L."/>
            <person name="Jones M."/>
            <person name="Leather S."/>
            <person name="McDonald S."/>
            <person name="McLean J."/>
            <person name="Mooney P."/>
            <person name="Moule S."/>
            <person name="Mungall K.L."/>
            <person name="Murphy L.D."/>
            <person name="Niblett D."/>
            <person name="Odell C."/>
            <person name="Oliver K."/>
            <person name="O'Neil S."/>
            <person name="Pearson D."/>
            <person name="Quail M.A."/>
            <person name="Rabbinowitsch E."/>
            <person name="Rutherford K.M."/>
            <person name="Rutter S."/>
            <person name="Saunders D."/>
            <person name="Seeger K."/>
            <person name="Sharp S."/>
            <person name="Skelton J."/>
            <person name="Simmonds M.N."/>
            <person name="Squares R."/>
            <person name="Squares S."/>
            <person name="Stevens K."/>
            <person name="Taylor K."/>
            <person name="Taylor R.G."/>
            <person name="Tivey A."/>
            <person name="Walsh S.V."/>
            <person name="Warren T."/>
            <person name="Whitehead S."/>
            <person name="Woodward J.R."/>
            <person name="Volckaert G."/>
            <person name="Aert R."/>
            <person name="Robben J."/>
            <person name="Grymonprez B."/>
            <person name="Weltjens I."/>
            <person name="Vanstreels E."/>
            <person name="Rieger M."/>
            <person name="Schaefer M."/>
            <person name="Mueller-Auer S."/>
            <person name="Gabel C."/>
            <person name="Fuchs M."/>
            <person name="Duesterhoeft A."/>
            <person name="Fritzc C."/>
            <person name="Holzer E."/>
            <person name="Moestl D."/>
            <person name="Hilbert H."/>
            <person name="Borzym K."/>
            <person name="Langer I."/>
            <person name="Beck A."/>
            <person name="Lehrach H."/>
            <person name="Reinhardt R."/>
            <person name="Pohl T.M."/>
            <person name="Eger P."/>
            <person name="Zimmermann W."/>
            <person name="Wedler H."/>
            <person name="Wambutt R."/>
            <person name="Purnelle B."/>
            <person name="Goffeau A."/>
            <person name="Cadieu E."/>
            <person name="Dreano S."/>
            <person name="Gloux S."/>
            <person name="Lelaure V."/>
            <person name="Mottier S."/>
            <person name="Galibert F."/>
            <person name="Aves S.J."/>
            <person name="Xiang Z."/>
            <person name="Hunt C."/>
            <person name="Moore K."/>
            <person name="Hurst S.M."/>
            <person name="Lucas M."/>
            <person name="Rochet M."/>
            <person name="Gaillardin C."/>
            <person name="Tallada V.A."/>
            <person name="Garzon A."/>
            <person name="Thode G."/>
            <person name="Daga R.R."/>
            <person name="Cruzado L."/>
            <person name="Jimenez J."/>
            <person name="Sanchez M."/>
            <person name="del Rey F."/>
            <person name="Benito J."/>
            <person name="Dominguez A."/>
            <person name="Revuelta J.L."/>
            <person name="Moreno S."/>
            <person name="Armstrong J."/>
            <person name="Forsburg S.L."/>
            <person name="Cerutti L."/>
            <person name="Lowe T."/>
            <person name="McCombie W.R."/>
            <person name="Paulsen I."/>
            <person name="Potashkin J."/>
            <person name="Shpakovski G.V."/>
            <person name="Ussery D."/>
            <person name="Barrell B.G."/>
            <person name="Nurse P."/>
        </authorList>
    </citation>
    <scope>NUCLEOTIDE SEQUENCE [LARGE SCALE GENOMIC DNA]</scope>
    <source>
        <strain>972 / ATCC 24843</strain>
    </source>
</reference>
<reference key="2">
    <citation type="journal article" date="2004" name="Yeast">
        <title>Identification of genes encoding putative nucleoporins and transport factors in the fission yeast Schizosaccharomyces pombe: a deletion analysis.</title>
        <authorList>
            <person name="Chen X.Q."/>
            <person name="Du X."/>
            <person name="Liu J."/>
            <person name="Balasubramanian M.K."/>
            <person name="Balasundaram D."/>
        </authorList>
    </citation>
    <scope>FUNCTION</scope>
    <scope>SUBCELLULAR LOCATION</scope>
</reference>
<reference key="3">
    <citation type="journal article" date="2006" name="Nat. Biotechnol.">
        <title>ORFeome cloning and global analysis of protein localization in the fission yeast Schizosaccharomyces pombe.</title>
        <authorList>
            <person name="Matsuyama A."/>
            <person name="Arai R."/>
            <person name="Yashiroda Y."/>
            <person name="Shirai A."/>
            <person name="Kamata A."/>
            <person name="Sekido S."/>
            <person name="Kobayashi Y."/>
            <person name="Hashimoto A."/>
            <person name="Hamamoto M."/>
            <person name="Hiraoka Y."/>
            <person name="Horinouchi S."/>
            <person name="Yoshida M."/>
        </authorList>
    </citation>
    <scope>SUBCELLULAR LOCATION [LARGE SCALE ANALYSIS]</scope>
</reference>
<reference key="4">
    <citation type="journal article" date="2008" name="J. Proteome Res.">
        <title>Phosphoproteome analysis of fission yeast.</title>
        <authorList>
            <person name="Wilson-Grady J.T."/>
            <person name="Villen J."/>
            <person name="Gygi S.P."/>
        </authorList>
    </citation>
    <scope>PHOSPHORYLATION [LARGE SCALE ANALYSIS] AT SER-289 AND SER-290</scope>
    <scope>IDENTIFICATION BY MASS SPECTROMETRY</scope>
</reference>
<keyword id="KW-0963">Cytoplasm</keyword>
<keyword id="KW-0509">mRNA transport</keyword>
<keyword id="KW-0906">Nuclear pore complex</keyword>
<keyword id="KW-0539">Nucleus</keyword>
<keyword id="KW-0597">Phosphoprotein</keyword>
<keyword id="KW-0653">Protein transport</keyword>
<keyword id="KW-1185">Reference proteome</keyword>
<keyword id="KW-0811">Translocation</keyword>
<keyword id="KW-0813">Transport</keyword>
<name>NUP45_SCHPO</name>
<organism>
    <name type="scientific">Schizosaccharomyces pombe (strain 972 / ATCC 24843)</name>
    <name type="common">Fission yeast</name>
    <dbReference type="NCBI Taxonomy" id="284812"/>
    <lineage>
        <taxon>Eukaryota</taxon>
        <taxon>Fungi</taxon>
        <taxon>Dikarya</taxon>
        <taxon>Ascomycota</taxon>
        <taxon>Taphrinomycotina</taxon>
        <taxon>Schizosaccharomycetes</taxon>
        <taxon>Schizosaccharomycetales</taxon>
        <taxon>Schizosaccharomycetaceae</taxon>
        <taxon>Schizosaccharomyces</taxon>
    </lineage>
</organism>
<evidence type="ECO:0000256" key="1">
    <source>
        <dbReference type="SAM" id="MobiDB-lite"/>
    </source>
</evidence>
<evidence type="ECO:0000269" key="2">
    <source>
    </source>
</evidence>
<evidence type="ECO:0000269" key="3">
    <source>
    </source>
</evidence>
<feature type="chain" id="PRO_0000204863" description="Nucleoporin nup45">
    <location>
        <begin position="1"/>
        <end position="425"/>
    </location>
</feature>
<feature type="region of interest" description="Disordered" evidence="1">
    <location>
        <begin position="1"/>
        <end position="207"/>
    </location>
</feature>
<feature type="compositionally biased region" description="Polar residues" evidence="1">
    <location>
        <begin position="1"/>
        <end position="10"/>
    </location>
</feature>
<feature type="compositionally biased region" description="Low complexity" evidence="1">
    <location>
        <begin position="11"/>
        <end position="27"/>
    </location>
</feature>
<feature type="compositionally biased region" description="Polar residues" evidence="1">
    <location>
        <begin position="28"/>
        <end position="45"/>
    </location>
</feature>
<feature type="compositionally biased region" description="Gly residues" evidence="1">
    <location>
        <begin position="47"/>
        <end position="56"/>
    </location>
</feature>
<feature type="compositionally biased region" description="Polar residues" evidence="1">
    <location>
        <begin position="72"/>
        <end position="89"/>
    </location>
</feature>
<feature type="compositionally biased region" description="Low complexity" evidence="1">
    <location>
        <begin position="112"/>
        <end position="126"/>
    </location>
</feature>
<feature type="compositionally biased region" description="Low complexity" evidence="1">
    <location>
        <begin position="135"/>
        <end position="150"/>
    </location>
</feature>
<feature type="compositionally biased region" description="Polar residues" evidence="1">
    <location>
        <begin position="167"/>
        <end position="207"/>
    </location>
</feature>
<feature type="modified residue" description="Phosphoserine" evidence="3">
    <location>
        <position position="289"/>
    </location>
</feature>
<feature type="modified residue" description="Phosphoserine" evidence="3">
    <location>
        <position position="290"/>
    </location>
</feature>